<proteinExistence type="evidence at protein level"/>
<comment type="function">
    <text>Plays a role in papillomavirus genes transcription.</text>
</comment>
<comment type="subunit">
    <text>Interacts with repression-mediating E2 binding site P2 of human papillomavirus type 8 (HPV8).</text>
</comment>
<comment type="interaction">
    <interactant intactId="EBI-3940507">
        <id>Q9H8N7</id>
    </interactant>
    <interactant intactId="EBI-359815">
        <id>P31946</id>
        <label>YWHAB</label>
    </interactant>
    <organismsDiffer>false</organismsDiffer>
    <experiments>3</experiments>
</comment>
<comment type="subcellular location">
    <subcellularLocation>
        <location>Cytoplasm</location>
    </subcellularLocation>
    <subcellularLocation>
        <location>Nucleus</location>
    </subcellularLocation>
    <text>May shuttle between nucleus and cytoplasm.</text>
</comment>
<comment type="tissue specificity">
    <text evidence="4 5">Widely expressed.</text>
</comment>
<feature type="chain" id="PRO_0000047561" description="Zinc finger protein 395">
    <location>
        <begin position="1"/>
        <end position="513"/>
    </location>
</feature>
<feature type="zinc finger region" description="C2H2-type" evidence="2">
    <location>
        <begin position="280"/>
        <end position="305"/>
    </location>
</feature>
<feature type="region of interest" description="Disordered" evidence="3">
    <location>
        <begin position="17"/>
        <end position="56"/>
    </location>
</feature>
<feature type="region of interest" description="Disordered" evidence="3">
    <location>
        <begin position="204"/>
        <end position="269"/>
    </location>
</feature>
<feature type="region of interest" description="Disordered" evidence="3">
    <location>
        <begin position="335"/>
        <end position="394"/>
    </location>
</feature>
<feature type="short sequence motif" description="Nuclear export signal" evidence="1">
    <location>
        <begin position="165"/>
        <end position="174"/>
    </location>
</feature>
<feature type="compositionally biased region" description="Low complexity" evidence="3">
    <location>
        <begin position="17"/>
        <end position="29"/>
    </location>
</feature>
<feature type="compositionally biased region" description="Polar residues" evidence="3">
    <location>
        <begin position="45"/>
        <end position="55"/>
    </location>
</feature>
<feature type="compositionally biased region" description="Low complexity" evidence="3">
    <location>
        <begin position="209"/>
        <end position="229"/>
    </location>
</feature>
<feature type="compositionally biased region" description="Polar residues" evidence="3">
    <location>
        <begin position="348"/>
        <end position="359"/>
    </location>
</feature>
<feature type="compositionally biased region" description="Low complexity" evidence="3">
    <location>
        <begin position="376"/>
        <end position="391"/>
    </location>
</feature>
<feature type="modified residue" description="Phosphoserine" evidence="7">
    <location>
        <position position="248"/>
    </location>
</feature>
<feature type="modified residue" description="Phosphoserine" evidence="9">
    <location>
        <position position="376"/>
    </location>
</feature>
<feature type="modified residue" description="Phosphoserine" evidence="8">
    <location>
        <position position="449"/>
    </location>
</feature>
<feature type="mutagenesis site" description="No change in subcellular location; when associated with A-113." evidence="5">
    <original>L</original>
    <variation>A</variation>
    <location>
        <position position="109"/>
    </location>
</feature>
<feature type="mutagenesis site" description="No change in subcellular location; when associated with A-109." evidence="5">
    <original>L</original>
    <variation>A</variation>
    <location>
        <position position="113"/>
    </location>
</feature>
<feature type="mutagenesis site" description="No shuttle from the nucleus to the cytoplasm; when associated with A-172." evidence="5">
    <original>M</original>
    <variation>A</variation>
    <location>
        <position position="169"/>
    </location>
</feature>
<feature type="mutagenesis site" description="No shuttle from the nucleus to the cytoplasm; when associated with A-169." evidence="5">
    <original>M</original>
    <variation>A</variation>
    <location>
        <position position="172"/>
    </location>
</feature>
<feature type="sequence conflict" description="In Ref. 2; BAA96783/BAD29734." evidence="6" ref="2">
    <original>G</original>
    <variation>R</variation>
    <location>
        <position position="140"/>
    </location>
</feature>
<feature type="sequence conflict" description="In Ref. 3; BAB14571." evidence="6" ref="3">
    <original>L</original>
    <variation>Q</variation>
    <location>
        <position position="464"/>
    </location>
</feature>
<organism>
    <name type="scientific">Homo sapiens</name>
    <name type="common">Human</name>
    <dbReference type="NCBI Taxonomy" id="9606"/>
    <lineage>
        <taxon>Eukaryota</taxon>
        <taxon>Metazoa</taxon>
        <taxon>Chordata</taxon>
        <taxon>Craniata</taxon>
        <taxon>Vertebrata</taxon>
        <taxon>Euteleostomi</taxon>
        <taxon>Mammalia</taxon>
        <taxon>Eutheria</taxon>
        <taxon>Euarchontoglires</taxon>
        <taxon>Primates</taxon>
        <taxon>Haplorrhini</taxon>
        <taxon>Catarrhini</taxon>
        <taxon>Hominidae</taxon>
        <taxon>Homo</taxon>
    </lineage>
</organism>
<evidence type="ECO:0000255" key="1"/>
<evidence type="ECO:0000255" key="2">
    <source>
        <dbReference type="PROSITE-ProRule" id="PRU00042"/>
    </source>
</evidence>
<evidence type="ECO:0000256" key="3">
    <source>
        <dbReference type="SAM" id="MobiDB-lite"/>
    </source>
</evidence>
<evidence type="ECO:0000269" key="4">
    <source>
    </source>
</evidence>
<evidence type="ECO:0000269" key="5">
    <source>
    </source>
</evidence>
<evidence type="ECO:0000305" key="6"/>
<evidence type="ECO:0007744" key="7">
    <source>
    </source>
</evidence>
<evidence type="ECO:0007744" key="8">
    <source>
    </source>
</evidence>
<evidence type="ECO:0007744" key="9">
    <source>
    </source>
</evidence>
<protein>
    <recommendedName>
        <fullName>Zinc finger protein 395</fullName>
    </recommendedName>
    <alternativeName>
        <fullName>HD-regulating factor 2</fullName>
        <shortName>HDRF-2</shortName>
    </alternativeName>
    <alternativeName>
        <fullName>Huntington disease gene regulatory region-binding protein 2</fullName>
        <shortName>HD gene regulatory region-binding protein 2</shortName>
        <shortName>HDBP-2</shortName>
    </alternativeName>
    <alternativeName>
        <fullName>Papillomavirus regulatory factor 1</fullName>
        <shortName>PRF-1</shortName>
    </alternativeName>
    <alternativeName>
        <fullName>Papillomavirus-binding factor</fullName>
    </alternativeName>
</protein>
<accession>Q9H8N7</accession>
<accession>B3KUY7</accession>
<accession>D3DST4</accession>
<accession>Q6F6H2</accession>
<accession>Q9BY72</accession>
<accession>Q9NPB2</accession>
<accession>Q9NS57</accession>
<accession>Q9NS58</accession>
<accession>Q9NS59</accession>
<gene>
    <name type="primary">ZNF395</name>
    <name type="synonym">HDBP2</name>
    <name type="synonym">PBF</name>
</gene>
<name>ZN395_HUMAN</name>
<keyword id="KW-0963">Cytoplasm</keyword>
<keyword id="KW-0238">DNA-binding</keyword>
<keyword id="KW-0479">Metal-binding</keyword>
<keyword id="KW-0539">Nucleus</keyword>
<keyword id="KW-0597">Phosphoprotein</keyword>
<keyword id="KW-1267">Proteomics identification</keyword>
<keyword id="KW-1185">Reference proteome</keyword>
<keyword id="KW-0804">Transcription</keyword>
<keyword id="KW-0805">Transcription regulation</keyword>
<keyword id="KW-0862">Zinc</keyword>
<keyword id="KW-0863">Zinc-finger</keyword>
<reference key="1">
    <citation type="journal article" date="2002" name="Virology">
        <title>A new cellular factor recognizes E2 binding sites of papillomaviruses which mediate transcriptional repression by E2.</title>
        <authorList>
            <person name="Boeckle S."/>
            <person name="Pfister H."/>
            <person name="Steger G."/>
        </authorList>
    </citation>
    <scope>NUCLEOTIDE SEQUENCE [MRNA]</scope>
    <scope>TISSUE SPECIFICITY</scope>
    <scope>BINDING TO HUMAN PAPILLOMAVIRUS TYPE 8 DNA</scope>
    <scope>SUBCELLULAR LOCATION</scope>
</reference>
<reference key="2">
    <citation type="journal article" date="2004" name="J. Biol. Chem.">
        <title>Novel nuclear shuttle proteins, HDBP1 and HDBP2, bind to neuronal cell-specific cis-regulatory element in the promoter for the human Huntington's disease gene.</title>
        <authorList>
            <person name="Tanaka K."/>
            <person name="Shouguchi-Miyata J."/>
            <person name="Miyamoto N."/>
            <person name="Ikeda J.-E."/>
        </authorList>
    </citation>
    <scope>NUCLEOTIDE SEQUENCE [MRNA]</scope>
    <scope>TISSUE SPECIFICITY</scope>
    <scope>DOMAIN</scope>
    <scope>SUBCELLULAR LOCATION</scope>
    <scope>MUTAGENESIS OF LEU-109; LEU-113; MET-169 AND MET-172</scope>
    <source>
        <tissue>Testis</tissue>
    </source>
</reference>
<reference key="3">
    <citation type="journal article" date="2004" name="Nat. Genet.">
        <title>Complete sequencing and characterization of 21,243 full-length human cDNAs.</title>
        <authorList>
            <person name="Ota T."/>
            <person name="Suzuki Y."/>
            <person name="Nishikawa T."/>
            <person name="Otsuki T."/>
            <person name="Sugiyama T."/>
            <person name="Irie R."/>
            <person name="Wakamatsu A."/>
            <person name="Hayashi K."/>
            <person name="Sato H."/>
            <person name="Nagai K."/>
            <person name="Kimura K."/>
            <person name="Makita H."/>
            <person name="Sekine M."/>
            <person name="Obayashi M."/>
            <person name="Nishi T."/>
            <person name="Shibahara T."/>
            <person name="Tanaka T."/>
            <person name="Ishii S."/>
            <person name="Yamamoto J."/>
            <person name="Saito K."/>
            <person name="Kawai Y."/>
            <person name="Isono Y."/>
            <person name="Nakamura Y."/>
            <person name="Nagahari K."/>
            <person name="Murakami K."/>
            <person name="Yasuda T."/>
            <person name="Iwayanagi T."/>
            <person name="Wagatsuma M."/>
            <person name="Shiratori A."/>
            <person name="Sudo H."/>
            <person name="Hosoiri T."/>
            <person name="Kaku Y."/>
            <person name="Kodaira H."/>
            <person name="Kondo H."/>
            <person name="Sugawara M."/>
            <person name="Takahashi M."/>
            <person name="Kanda K."/>
            <person name="Yokoi T."/>
            <person name="Furuya T."/>
            <person name="Kikkawa E."/>
            <person name="Omura Y."/>
            <person name="Abe K."/>
            <person name="Kamihara K."/>
            <person name="Katsuta N."/>
            <person name="Sato K."/>
            <person name="Tanikawa M."/>
            <person name="Yamazaki M."/>
            <person name="Ninomiya K."/>
            <person name="Ishibashi T."/>
            <person name="Yamashita H."/>
            <person name="Murakawa K."/>
            <person name="Fujimori K."/>
            <person name="Tanai H."/>
            <person name="Kimata M."/>
            <person name="Watanabe M."/>
            <person name="Hiraoka S."/>
            <person name="Chiba Y."/>
            <person name="Ishida S."/>
            <person name="Ono Y."/>
            <person name="Takiguchi S."/>
            <person name="Watanabe S."/>
            <person name="Yosida M."/>
            <person name="Hotuta T."/>
            <person name="Kusano J."/>
            <person name="Kanehori K."/>
            <person name="Takahashi-Fujii A."/>
            <person name="Hara H."/>
            <person name="Tanase T.-O."/>
            <person name="Nomura Y."/>
            <person name="Togiya S."/>
            <person name="Komai F."/>
            <person name="Hara R."/>
            <person name="Takeuchi K."/>
            <person name="Arita M."/>
            <person name="Imose N."/>
            <person name="Musashino K."/>
            <person name="Yuuki H."/>
            <person name="Oshima A."/>
            <person name="Sasaki N."/>
            <person name="Aotsuka S."/>
            <person name="Yoshikawa Y."/>
            <person name="Matsunawa H."/>
            <person name="Ichihara T."/>
            <person name="Shiohata N."/>
            <person name="Sano S."/>
            <person name="Moriya S."/>
            <person name="Momiyama H."/>
            <person name="Satoh N."/>
            <person name="Takami S."/>
            <person name="Terashima Y."/>
            <person name="Suzuki O."/>
            <person name="Nakagawa S."/>
            <person name="Senoh A."/>
            <person name="Mizoguchi H."/>
            <person name="Goto Y."/>
            <person name="Shimizu F."/>
            <person name="Wakebe H."/>
            <person name="Hishigaki H."/>
            <person name="Watanabe T."/>
            <person name="Sugiyama A."/>
            <person name="Takemoto M."/>
            <person name="Kawakami B."/>
            <person name="Yamazaki M."/>
            <person name="Watanabe K."/>
            <person name="Kumagai A."/>
            <person name="Itakura S."/>
            <person name="Fukuzumi Y."/>
            <person name="Fujimori Y."/>
            <person name="Komiyama M."/>
            <person name="Tashiro H."/>
            <person name="Tanigami A."/>
            <person name="Fujiwara T."/>
            <person name="Ono T."/>
            <person name="Yamada K."/>
            <person name="Fujii Y."/>
            <person name="Ozaki K."/>
            <person name="Hirao M."/>
            <person name="Ohmori Y."/>
            <person name="Kawabata A."/>
            <person name="Hikiji T."/>
            <person name="Kobatake N."/>
            <person name="Inagaki H."/>
            <person name="Ikema Y."/>
            <person name="Okamoto S."/>
            <person name="Okitani R."/>
            <person name="Kawakami T."/>
            <person name="Noguchi S."/>
            <person name="Itoh T."/>
            <person name="Shigeta K."/>
            <person name="Senba T."/>
            <person name="Matsumura K."/>
            <person name="Nakajima Y."/>
            <person name="Mizuno T."/>
            <person name="Morinaga M."/>
            <person name="Sasaki M."/>
            <person name="Togashi T."/>
            <person name="Oyama M."/>
            <person name="Hata H."/>
            <person name="Watanabe M."/>
            <person name="Komatsu T."/>
            <person name="Mizushima-Sugano J."/>
            <person name="Satoh T."/>
            <person name="Shirai Y."/>
            <person name="Takahashi Y."/>
            <person name="Nakagawa K."/>
            <person name="Okumura K."/>
            <person name="Nagase T."/>
            <person name="Nomura N."/>
            <person name="Kikuchi H."/>
            <person name="Masuho Y."/>
            <person name="Yamashita R."/>
            <person name="Nakai K."/>
            <person name="Yada T."/>
            <person name="Nakamura Y."/>
            <person name="Ohara O."/>
            <person name="Isogai T."/>
            <person name="Sugano S."/>
        </authorList>
    </citation>
    <scope>NUCLEOTIDE SEQUENCE [LARGE SCALE MRNA]</scope>
    <source>
        <tissue>Placenta</tissue>
        <tissue>Uterus</tissue>
    </source>
</reference>
<reference key="4">
    <citation type="submission" date="2005-09" db="EMBL/GenBank/DDBJ databases">
        <authorList>
            <person name="Mural R.J."/>
            <person name="Istrail S."/>
            <person name="Sutton G.G."/>
            <person name="Florea L."/>
            <person name="Halpern A.L."/>
            <person name="Mobarry C.M."/>
            <person name="Lippert R."/>
            <person name="Walenz B."/>
            <person name="Shatkay H."/>
            <person name="Dew I."/>
            <person name="Miller J.R."/>
            <person name="Flanigan M.J."/>
            <person name="Edwards N.J."/>
            <person name="Bolanos R."/>
            <person name="Fasulo D."/>
            <person name="Halldorsson B.V."/>
            <person name="Hannenhalli S."/>
            <person name="Turner R."/>
            <person name="Yooseph S."/>
            <person name="Lu F."/>
            <person name="Nusskern D.R."/>
            <person name="Shue B.C."/>
            <person name="Zheng X.H."/>
            <person name="Zhong F."/>
            <person name="Delcher A.L."/>
            <person name="Huson D.H."/>
            <person name="Kravitz S.A."/>
            <person name="Mouchard L."/>
            <person name="Reinert K."/>
            <person name="Remington K.A."/>
            <person name="Clark A.G."/>
            <person name="Waterman M.S."/>
            <person name="Eichler E.E."/>
            <person name="Adams M.D."/>
            <person name="Hunkapiller M.W."/>
            <person name="Myers E.W."/>
            <person name="Venter J.C."/>
        </authorList>
    </citation>
    <scope>NUCLEOTIDE SEQUENCE [LARGE SCALE GENOMIC DNA]</scope>
</reference>
<reference key="5">
    <citation type="journal article" date="2004" name="Genome Res.">
        <title>The status, quality, and expansion of the NIH full-length cDNA project: the Mammalian Gene Collection (MGC).</title>
        <authorList>
            <consortium name="The MGC Project Team"/>
        </authorList>
    </citation>
    <scope>NUCLEOTIDE SEQUENCE [LARGE SCALE MRNA]</scope>
    <source>
        <tissue>Placenta</tissue>
    </source>
</reference>
<reference key="6">
    <citation type="journal article" date="2009" name="Sci. Signal.">
        <title>Quantitative phosphoproteomic analysis of T cell receptor signaling reveals system-wide modulation of protein-protein interactions.</title>
        <authorList>
            <person name="Mayya V."/>
            <person name="Lundgren D.H."/>
            <person name="Hwang S.-I."/>
            <person name="Rezaul K."/>
            <person name="Wu L."/>
            <person name="Eng J.K."/>
            <person name="Rodionov V."/>
            <person name="Han D.K."/>
        </authorList>
    </citation>
    <scope>PHOSPHORYLATION [LARGE SCALE ANALYSIS] AT SER-248</scope>
    <scope>IDENTIFICATION BY MASS SPECTROMETRY [LARGE SCALE ANALYSIS]</scope>
    <source>
        <tissue>Leukemic T-cell</tissue>
    </source>
</reference>
<reference key="7">
    <citation type="journal article" date="2010" name="Sci. Signal.">
        <title>Quantitative phosphoproteomics reveals widespread full phosphorylation site occupancy during mitosis.</title>
        <authorList>
            <person name="Olsen J.V."/>
            <person name="Vermeulen M."/>
            <person name="Santamaria A."/>
            <person name="Kumar C."/>
            <person name="Miller M.L."/>
            <person name="Jensen L.J."/>
            <person name="Gnad F."/>
            <person name="Cox J."/>
            <person name="Jensen T.S."/>
            <person name="Nigg E.A."/>
            <person name="Brunak S."/>
            <person name="Mann M."/>
        </authorList>
    </citation>
    <scope>IDENTIFICATION BY MASS SPECTROMETRY [LARGE SCALE ANALYSIS]</scope>
    <source>
        <tissue>Cervix carcinoma</tissue>
    </source>
</reference>
<reference key="8">
    <citation type="journal article" date="2013" name="J. Proteome Res.">
        <title>Toward a comprehensive characterization of a human cancer cell phosphoproteome.</title>
        <authorList>
            <person name="Zhou H."/>
            <person name="Di Palma S."/>
            <person name="Preisinger C."/>
            <person name="Peng M."/>
            <person name="Polat A.N."/>
            <person name="Heck A.J."/>
            <person name="Mohammed S."/>
        </authorList>
    </citation>
    <scope>PHOSPHORYLATION [LARGE SCALE ANALYSIS] AT SER-449</scope>
    <scope>IDENTIFICATION BY MASS SPECTROMETRY [LARGE SCALE ANALYSIS]</scope>
    <source>
        <tissue>Erythroleukemia</tissue>
    </source>
</reference>
<reference key="9">
    <citation type="journal article" date="2014" name="J. Proteomics">
        <title>An enzyme assisted RP-RPLC approach for in-depth analysis of human liver phosphoproteome.</title>
        <authorList>
            <person name="Bian Y."/>
            <person name="Song C."/>
            <person name="Cheng K."/>
            <person name="Dong M."/>
            <person name="Wang F."/>
            <person name="Huang J."/>
            <person name="Sun D."/>
            <person name="Wang L."/>
            <person name="Ye M."/>
            <person name="Zou H."/>
        </authorList>
    </citation>
    <scope>PHOSPHORYLATION [LARGE SCALE ANALYSIS] AT SER-376</scope>
    <scope>IDENTIFICATION BY MASS SPECTROMETRY [LARGE SCALE ANALYSIS]</scope>
    <source>
        <tissue>Liver</tissue>
    </source>
</reference>
<dbReference type="EMBL" id="AF263928">
    <property type="protein sequence ID" value="AAF73463.1"/>
    <property type="molecule type" value="mRNA"/>
</dbReference>
<dbReference type="EMBL" id="AB044750">
    <property type="protein sequence ID" value="BAA96783.1"/>
    <property type="molecule type" value="mRNA"/>
</dbReference>
<dbReference type="EMBL" id="AB044751">
    <property type="protein sequence ID" value="BAA96784.1"/>
    <property type="molecule type" value="mRNA"/>
</dbReference>
<dbReference type="EMBL" id="AB044752">
    <property type="protein sequence ID" value="BAA96785.1"/>
    <property type="molecule type" value="mRNA"/>
</dbReference>
<dbReference type="EMBL" id="AB057659">
    <property type="protein sequence ID" value="BAB39851.1"/>
    <property type="molecule type" value="mRNA"/>
</dbReference>
<dbReference type="EMBL" id="AB073627">
    <property type="protein sequence ID" value="BAD29734.1"/>
    <property type="molecule type" value="mRNA"/>
</dbReference>
<dbReference type="EMBL" id="AK002050">
    <property type="protein sequence ID" value="BAA92056.1"/>
    <property type="molecule type" value="mRNA"/>
</dbReference>
<dbReference type="EMBL" id="AK023418">
    <property type="protein sequence ID" value="BAB14571.1"/>
    <property type="molecule type" value="mRNA"/>
</dbReference>
<dbReference type="EMBL" id="AK098243">
    <property type="protein sequence ID" value="BAG53599.1"/>
    <property type="molecule type" value="mRNA"/>
</dbReference>
<dbReference type="EMBL" id="CH471080">
    <property type="protein sequence ID" value="EAW63519.1"/>
    <property type="molecule type" value="Genomic_DNA"/>
</dbReference>
<dbReference type="EMBL" id="CH471080">
    <property type="protein sequence ID" value="EAW63521.1"/>
    <property type="molecule type" value="Genomic_DNA"/>
</dbReference>
<dbReference type="EMBL" id="CH471080">
    <property type="protein sequence ID" value="EAW63522.1"/>
    <property type="molecule type" value="Genomic_DNA"/>
</dbReference>
<dbReference type="EMBL" id="CH471080">
    <property type="protein sequence ID" value="EAW63523.1"/>
    <property type="molecule type" value="Genomic_DNA"/>
</dbReference>
<dbReference type="EMBL" id="CH471080">
    <property type="protein sequence ID" value="EAW63524.1"/>
    <property type="molecule type" value="Genomic_DNA"/>
</dbReference>
<dbReference type="EMBL" id="BC001237">
    <property type="protein sequence ID" value="AAH01237.1"/>
    <property type="molecule type" value="mRNA"/>
</dbReference>
<dbReference type="CCDS" id="CCDS6067.1"/>
<dbReference type="RefSeq" id="NP_061130.1">
    <property type="nucleotide sequence ID" value="NM_018660.3"/>
</dbReference>
<dbReference type="SMR" id="Q9H8N7"/>
<dbReference type="BioGRID" id="120983">
    <property type="interactions" value="18"/>
</dbReference>
<dbReference type="FunCoup" id="Q9H8N7">
    <property type="interactions" value="2167"/>
</dbReference>
<dbReference type="IntAct" id="Q9H8N7">
    <property type="interactions" value="13"/>
</dbReference>
<dbReference type="MINT" id="Q9H8N7"/>
<dbReference type="STRING" id="9606.ENSP00000340494"/>
<dbReference type="GlyGen" id="Q9H8N7">
    <property type="glycosylation" value="1 site"/>
</dbReference>
<dbReference type="iPTMnet" id="Q9H8N7"/>
<dbReference type="PhosphoSitePlus" id="Q9H8N7"/>
<dbReference type="BioMuta" id="ZNF395"/>
<dbReference type="DMDM" id="84028224"/>
<dbReference type="jPOST" id="Q9H8N7"/>
<dbReference type="MassIVE" id="Q9H8N7"/>
<dbReference type="PaxDb" id="9606-ENSP00000340494"/>
<dbReference type="PeptideAtlas" id="Q9H8N7"/>
<dbReference type="ProteomicsDB" id="81230"/>
<dbReference type="Antibodypedia" id="10391">
    <property type="antibodies" value="222 antibodies from 26 providers"/>
</dbReference>
<dbReference type="DNASU" id="55893"/>
<dbReference type="Ensembl" id="ENST00000344423.10">
    <property type="protein sequence ID" value="ENSP00000340494.5"/>
    <property type="gene ID" value="ENSG00000186918.14"/>
</dbReference>
<dbReference type="Ensembl" id="ENST00000523095.5">
    <property type="protein sequence ID" value="ENSP00000428452.1"/>
    <property type="gene ID" value="ENSG00000186918.14"/>
</dbReference>
<dbReference type="Ensembl" id="ENST00000523202.5">
    <property type="protein sequence ID" value="ENSP00000429640.1"/>
    <property type="gene ID" value="ENSG00000186918.14"/>
</dbReference>
<dbReference type="GeneID" id="55893"/>
<dbReference type="KEGG" id="hsa:55893"/>
<dbReference type="MANE-Select" id="ENST00000344423.10">
    <property type="protein sequence ID" value="ENSP00000340494.5"/>
    <property type="RefSeq nucleotide sequence ID" value="NM_018660.3"/>
    <property type="RefSeq protein sequence ID" value="NP_061130.1"/>
</dbReference>
<dbReference type="UCSC" id="uc003xgq.4">
    <property type="organism name" value="human"/>
</dbReference>
<dbReference type="AGR" id="HGNC:18737"/>
<dbReference type="CTD" id="55893"/>
<dbReference type="DisGeNET" id="55893"/>
<dbReference type="GeneCards" id="ZNF395"/>
<dbReference type="HGNC" id="HGNC:18737">
    <property type="gene designation" value="ZNF395"/>
</dbReference>
<dbReference type="HPA" id="ENSG00000186918">
    <property type="expression patterns" value="Low tissue specificity"/>
</dbReference>
<dbReference type="MIM" id="609494">
    <property type="type" value="gene"/>
</dbReference>
<dbReference type="neXtProt" id="NX_Q9H8N7"/>
<dbReference type="OpenTargets" id="ENSG00000186918"/>
<dbReference type="PharmGKB" id="PA134978145"/>
<dbReference type="VEuPathDB" id="HostDB:ENSG00000186918"/>
<dbReference type="eggNOG" id="ENOG502QW7P">
    <property type="taxonomic scope" value="Eukaryota"/>
</dbReference>
<dbReference type="GeneTree" id="ENSGT00940000157136"/>
<dbReference type="HOGENOM" id="CLU_032989_2_1_1"/>
<dbReference type="InParanoid" id="Q9H8N7"/>
<dbReference type="OMA" id="DHDYQRK"/>
<dbReference type="OrthoDB" id="5950721at2759"/>
<dbReference type="PAN-GO" id="Q9H8N7">
    <property type="GO annotations" value="4 GO annotations based on evolutionary models"/>
</dbReference>
<dbReference type="PhylomeDB" id="Q9H8N7"/>
<dbReference type="TreeFam" id="TF326610"/>
<dbReference type="PathwayCommons" id="Q9H8N7"/>
<dbReference type="SignaLink" id="Q9H8N7"/>
<dbReference type="BioGRID-ORCS" id="55893">
    <property type="hits" value="23 hits in 1166 CRISPR screens"/>
</dbReference>
<dbReference type="ChiTaRS" id="ZNF395">
    <property type="organism name" value="human"/>
</dbReference>
<dbReference type="GenomeRNAi" id="55893"/>
<dbReference type="Pharos" id="Q9H8N7">
    <property type="development level" value="Tbio"/>
</dbReference>
<dbReference type="PRO" id="PR:Q9H8N7"/>
<dbReference type="Proteomes" id="UP000005640">
    <property type="component" value="Chromosome 8"/>
</dbReference>
<dbReference type="RNAct" id="Q9H8N7">
    <property type="molecule type" value="protein"/>
</dbReference>
<dbReference type="Bgee" id="ENSG00000186918">
    <property type="expression patterns" value="Expressed in nipple and 203 other cell types or tissues"/>
</dbReference>
<dbReference type="ExpressionAtlas" id="Q9H8N7">
    <property type="expression patterns" value="baseline and differential"/>
</dbReference>
<dbReference type="GO" id="GO:0005737">
    <property type="term" value="C:cytoplasm"/>
    <property type="evidence" value="ECO:0000314"/>
    <property type="project" value="UniProtKB"/>
</dbReference>
<dbReference type="GO" id="GO:0005829">
    <property type="term" value="C:cytosol"/>
    <property type="evidence" value="ECO:0000314"/>
    <property type="project" value="HPA"/>
</dbReference>
<dbReference type="GO" id="GO:0016607">
    <property type="term" value="C:nuclear speck"/>
    <property type="evidence" value="ECO:0000314"/>
    <property type="project" value="HPA"/>
</dbReference>
<dbReference type="GO" id="GO:0005654">
    <property type="term" value="C:nucleoplasm"/>
    <property type="evidence" value="ECO:0000314"/>
    <property type="project" value="HPA"/>
</dbReference>
<dbReference type="GO" id="GO:0005634">
    <property type="term" value="C:nucleus"/>
    <property type="evidence" value="ECO:0000314"/>
    <property type="project" value="UniProtKB"/>
</dbReference>
<dbReference type="GO" id="GO:0000987">
    <property type="term" value="F:cis-regulatory region sequence-specific DNA binding"/>
    <property type="evidence" value="ECO:0000314"/>
    <property type="project" value="ARUK-UCL"/>
</dbReference>
<dbReference type="GO" id="GO:0003677">
    <property type="term" value="F:DNA binding"/>
    <property type="evidence" value="ECO:0000314"/>
    <property type="project" value="UniProtKB"/>
</dbReference>
<dbReference type="GO" id="GO:0001228">
    <property type="term" value="F:DNA-binding transcription activator activity, RNA polymerase II-specific"/>
    <property type="evidence" value="ECO:0000315"/>
    <property type="project" value="ARUK-UCL"/>
</dbReference>
<dbReference type="GO" id="GO:0003700">
    <property type="term" value="F:DNA-binding transcription factor activity"/>
    <property type="evidence" value="ECO:0000318"/>
    <property type="project" value="GO_Central"/>
</dbReference>
<dbReference type="GO" id="GO:0000978">
    <property type="term" value="F:RNA polymerase II cis-regulatory region sequence-specific DNA binding"/>
    <property type="evidence" value="ECO:0000314"/>
    <property type="project" value="NTNU_SB"/>
</dbReference>
<dbReference type="GO" id="GO:0008270">
    <property type="term" value="F:zinc ion binding"/>
    <property type="evidence" value="ECO:0007669"/>
    <property type="project" value="UniProtKB-KW"/>
</dbReference>
<dbReference type="GO" id="GO:0045944">
    <property type="term" value="P:positive regulation of transcription by RNA polymerase II"/>
    <property type="evidence" value="ECO:0000315"/>
    <property type="project" value="ARUK-UCL"/>
</dbReference>
<dbReference type="GO" id="GO:0006355">
    <property type="term" value="P:regulation of DNA-templated transcription"/>
    <property type="evidence" value="ECO:0000305"/>
    <property type="project" value="UniProtKB"/>
</dbReference>
<dbReference type="GO" id="GO:0006357">
    <property type="term" value="P:regulation of transcription by RNA polymerase II"/>
    <property type="evidence" value="ECO:0000318"/>
    <property type="project" value="GO_Central"/>
</dbReference>
<dbReference type="InterPro" id="IPR052253">
    <property type="entry name" value="CR1/CR2-DNA-binding_regulator"/>
</dbReference>
<dbReference type="InterPro" id="IPR031940">
    <property type="entry name" value="DUF4772"/>
</dbReference>
<dbReference type="InterPro" id="IPR013087">
    <property type="entry name" value="Znf_C2H2_type"/>
</dbReference>
<dbReference type="PANTHER" id="PTHR13006">
    <property type="entry name" value="PAPILLOMAVIRUS REGULATORY FACTOR PRF-1"/>
    <property type="match status" value="1"/>
</dbReference>
<dbReference type="PANTHER" id="PTHR13006:SF6">
    <property type="entry name" value="ZINC FINGER PROTEIN 395"/>
    <property type="match status" value="1"/>
</dbReference>
<dbReference type="Pfam" id="PF15997">
    <property type="entry name" value="DUF4772"/>
    <property type="match status" value="1"/>
</dbReference>
<dbReference type="SMART" id="SM01366">
    <property type="entry name" value="c-clamp"/>
    <property type="match status" value="1"/>
</dbReference>
<dbReference type="PROSITE" id="PS00028">
    <property type="entry name" value="ZINC_FINGER_C2H2_1"/>
    <property type="match status" value="1"/>
</dbReference>
<dbReference type="PROSITE" id="PS50157">
    <property type="entry name" value="ZINC_FINGER_C2H2_2"/>
    <property type="match status" value="1"/>
</dbReference>
<sequence length="513" mass="54939">MASVLSRRLGKRSLLGARVLGPSASEGPSAAPPSEPLLEGAAPQPFTTSDDTPCQEQPKEVLKAPSTSGLQQVAFQPGQKVYVWYGGQECTGLVEQHSWMEGQVTVWLLEQKLQVCCRVEEVWLAELQGPCPQAPPLEPGAQALAYRPVSRNIDVPKRKSDAVEMDEMMAAMVLTSLSCSPVVQSPPGTEANFSASRAACDPWKESGDISDSGSSTTSGHWSGSSGVSTPSPPHPQASPKYLGDAFGSPQTDHGFETDPDPFLLDEPAPRKRKNSVKVMYKCLWPNCGKVLRSIVGIKRHVKALHLGDTVDSDQFKREEDFYYTEVQLKEESAAAAAAAAAGTPVPGTPTSEPAPTPSMTGLPLSALPPPLHKAQSSGPEHPGPESSLPSGALSKSAPGSFWHIQADHAYQALPSFQIPVSPHIYTSVSWAAAPSAACSLSPVRSRSLSFSEPQQPAPAMKSHLIVTSPPRAQSGARKARGEAKKCRKVYGIEHRDQWCTACRWKKACQRFLD</sequence>